<accession>B4SDV8</accession>
<comment type="catalytic activity">
    <reaction evidence="1">
        <text>1-(2-carboxyphenylamino)-1-deoxy-D-ribulose 5-phosphate + H(+) = (1S,2R)-1-C-(indol-3-yl)glycerol 3-phosphate + CO2 + H2O</text>
        <dbReference type="Rhea" id="RHEA:23476"/>
        <dbReference type="ChEBI" id="CHEBI:15377"/>
        <dbReference type="ChEBI" id="CHEBI:15378"/>
        <dbReference type="ChEBI" id="CHEBI:16526"/>
        <dbReference type="ChEBI" id="CHEBI:58613"/>
        <dbReference type="ChEBI" id="CHEBI:58866"/>
        <dbReference type="EC" id="4.1.1.48"/>
    </reaction>
</comment>
<comment type="pathway">
    <text evidence="1">Amino-acid biosynthesis; L-tryptophan biosynthesis; L-tryptophan from chorismate: step 4/5.</text>
</comment>
<comment type="similarity">
    <text evidence="1">Belongs to the TrpC family.</text>
</comment>
<proteinExistence type="inferred from homology"/>
<organism>
    <name type="scientific">Pelodictyon phaeoclathratiforme (strain DSM 5477 / BU-1)</name>
    <dbReference type="NCBI Taxonomy" id="324925"/>
    <lineage>
        <taxon>Bacteria</taxon>
        <taxon>Pseudomonadati</taxon>
        <taxon>Chlorobiota</taxon>
        <taxon>Chlorobiia</taxon>
        <taxon>Chlorobiales</taxon>
        <taxon>Chlorobiaceae</taxon>
        <taxon>Chlorobium/Pelodictyon group</taxon>
        <taxon>Pelodictyon</taxon>
    </lineage>
</organism>
<keyword id="KW-0028">Amino-acid biosynthesis</keyword>
<keyword id="KW-0057">Aromatic amino acid biosynthesis</keyword>
<keyword id="KW-0210">Decarboxylase</keyword>
<keyword id="KW-0456">Lyase</keyword>
<keyword id="KW-1185">Reference proteome</keyword>
<keyword id="KW-0822">Tryptophan biosynthesis</keyword>
<reference key="1">
    <citation type="submission" date="2008-06" db="EMBL/GenBank/DDBJ databases">
        <title>Complete sequence of Pelodictyon phaeoclathratiforme BU-1.</title>
        <authorList>
            <consortium name="US DOE Joint Genome Institute"/>
            <person name="Lucas S."/>
            <person name="Copeland A."/>
            <person name="Lapidus A."/>
            <person name="Glavina del Rio T."/>
            <person name="Dalin E."/>
            <person name="Tice H."/>
            <person name="Bruce D."/>
            <person name="Goodwin L."/>
            <person name="Pitluck S."/>
            <person name="Schmutz J."/>
            <person name="Larimer F."/>
            <person name="Land M."/>
            <person name="Hauser L."/>
            <person name="Kyrpides N."/>
            <person name="Mikhailova N."/>
            <person name="Liu Z."/>
            <person name="Li T."/>
            <person name="Zhao F."/>
            <person name="Overmann J."/>
            <person name="Bryant D.A."/>
            <person name="Richardson P."/>
        </authorList>
    </citation>
    <scope>NUCLEOTIDE SEQUENCE [LARGE SCALE GENOMIC DNA]</scope>
    <source>
        <strain>DSM 5477 / BU-1</strain>
    </source>
</reference>
<evidence type="ECO:0000255" key="1">
    <source>
        <dbReference type="HAMAP-Rule" id="MF_00134"/>
    </source>
</evidence>
<sequence length="256" mass="28193">MSYLSRILEEKEREVGELASEHPARRYAELQGSLAPTRDFTGALRRTGRGLRLIAEIKKASPSRGLIVPDFDPVNIARRYGELGAAAYSVLTDRTFFQGSIDYLQMVSRSFQLPVLRKDFIIDESQIFQSRLTGADAILLIVAALDSCQLGDYLQLAASVGLHVLVEVHDRKELDRAIEKGAPIIGVNNRDLKDFSLKLETSLSLRPFIPSDVLAVSESGLKSSADIALIEQASFDAVLIGEGLYTSPELGRITWS</sequence>
<feature type="chain" id="PRO_1000095876" description="Indole-3-glycerol phosphate synthase">
    <location>
        <begin position="1"/>
        <end position="256"/>
    </location>
</feature>
<gene>
    <name evidence="1" type="primary">trpC</name>
    <name type="ordered locus">Ppha_0650</name>
</gene>
<dbReference type="EC" id="4.1.1.48" evidence="1"/>
<dbReference type="EMBL" id="CP001110">
    <property type="protein sequence ID" value="ACF42949.1"/>
    <property type="molecule type" value="Genomic_DNA"/>
</dbReference>
<dbReference type="RefSeq" id="WP_012507444.1">
    <property type="nucleotide sequence ID" value="NC_011060.1"/>
</dbReference>
<dbReference type="SMR" id="B4SDV8"/>
<dbReference type="STRING" id="324925.Ppha_0650"/>
<dbReference type="KEGG" id="pph:Ppha_0650"/>
<dbReference type="eggNOG" id="COG0134">
    <property type="taxonomic scope" value="Bacteria"/>
</dbReference>
<dbReference type="HOGENOM" id="CLU_034247_2_0_10"/>
<dbReference type="OrthoDB" id="9804217at2"/>
<dbReference type="UniPathway" id="UPA00035">
    <property type="reaction ID" value="UER00043"/>
</dbReference>
<dbReference type="Proteomes" id="UP000002724">
    <property type="component" value="Chromosome"/>
</dbReference>
<dbReference type="GO" id="GO:0004425">
    <property type="term" value="F:indole-3-glycerol-phosphate synthase activity"/>
    <property type="evidence" value="ECO:0007669"/>
    <property type="project" value="UniProtKB-UniRule"/>
</dbReference>
<dbReference type="GO" id="GO:0004640">
    <property type="term" value="F:phosphoribosylanthranilate isomerase activity"/>
    <property type="evidence" value="ECO:0007669"/>
    <property type="project" value="TreeGrafter"/>
</dbReference>
<dbReference type="GO" id="GO:0000162">
    <property type="term" value="P:L-tryptophan biosynthetic process"/>
    <property type="evidence" value="ECO:0007669"/>
    <property type="project" value="UniProtKB-UniRule"/>
</dbReference>
<dbReference type="CDD" id="cd00331">
    <property type="entry name" value="IGPS"/>
    <property type="match status" value="1"/>
</dbReference>
<dbReference type="FunFam" id="3.20.20.70:FF:000024">
    <property type="entry name" value="Indole-3-glycerol phosphate synthase"/>
    <property type="match status" value="1"/>
</dbReference>
<dbReference type="Gene3D" id="3.20.20.70">
    <property type="entry name" value="Aldolase class I"/>
    <property type="match status" value="1"/>
</dbReference>
<dbReference type="HAMAP" id="MF_00134_B">
    <property type="entry name" value="IGPS_B"/>
    <property type="match status" value="1"/>
</dbReference>
<dbReference type="InterPro" id="IPR013785">
    <property type="entry name" value="Aldolase_TIM"/>
</dbReference>
<dbReference type="InterPro" id="IPR045186">
    <property type="entry name" value="Indole-3-glycerol_P_synth"/>
</dbReference>
<dbReference type="InterPro" id="IPR013798">
    <property type="entry name" value="Indole-3-glycerol_P_synth_dom"/>
</dbReference>
<dbReference type="InterPro" id="IPR001468">
    <property type="entry name" value="Indole-3-GlycerolPSynthase_CS"/>
</dbReference>
<dbReference type="InterPro" id="IPR011060">
    <property type="entry name" value="RibuloseP-bd_barrel"/>
</dbReference>
<dbReference type="NCBIfam" id="NF001377">
    <property type="entry name" value="PRK00278.2-4"/>
    <property type="match status" value="1"/>
</dbReference>
<dbReference type="PANTHER" id="PTHR22854:SF2">
    <property type="entry name" value="INDOLE-3-GLYCEROL-PHOSPHATE SYNTHASE"/>
    <property type="match status" value="1"/>
</dbReference>
<dbReference type="PANTHER" id="PTHR22854">
    <property type="entry name" value="TRYPTOPHAN BIOSYNTHESIS PROTEIN"/>
    <property type="match status" value="1"/>
</dbReference>
<dbReference type="Pfam" id="PF00218">
    <property type="entry name" value="IGPS"/>
    <property type="match status" value="1"/>
</dbReference>
<dbReference type="SUPFAM" id="SSF51366">
    <property type="entry name" value="Ribulose-phoshate binding barrel"/>
    <property type="match status" value="1"/>
</dbReference>
<dbReference type="PROSITE" id="PS00614">
    <property type="entry name" value="IGPS"/>
    <property type="match status" value="1"/>
</dbReference>
<protein>
    <recommendedName>
        <fullName evidence="1">Indole-3-glycerol phosphate synthase</fullName>
        <shortName evidence="1">IGPS</shortName>
        <ecNumber evidence="1">4.1.1.48</ecNumber>
    </recommendedName>
</protein>
<name>TRPC_PELPB</name>